<organism>
    <name type="scientific">Yarrowia lipolytica (strain CLIB 122 / E 150)</name>
    <name type="common">Yeast</name>
    <name type="synonym">Candida lipolytica</name>
    <dbReference type="NCBI Taxonomy" id="284591"/>
    <lineage>
        <taxon>Eukaryota</taxon>
        <taxon>Fungi</taxon>
        <taxon>Dikarya</taxon>
        <taxon>Ascomycota</taxon>
        <taxon>Saccharomycotina</taxon>
        <taxon>Dipodascomycetes</taxon>
        <taxon>Dipodascales</taxon>
        <taxon>Dipodascales incertae sedis</taxon>
        <taxon>Yarrowia</taxon>
    </lineage>
</organism>
<name>ACOX3_YARLI</name>
<evidence type="ECO:0000250" key="1"/>
<evidence type="ECO:0000269" key="2">
    <source>
    </source>
</evidence>
<evidence type="ECO:0000305" key="3"/>
<evidence type="ECO:0007829" key="4">
    <source>
        <dbReference type="PDB" id="5YS9"/>
    </source>
</evidence>
<keyword id="KW-0002">3D-structure</keyword>
<keyword id="KW-0274">FAD</keyword>
<keyword id="KW-0276">Fatty acid metabolism</keyword>
<keyword id="KW-0285">Flavoprotein</keyword>
<keyword id="KW-0443">Lipid metabolism</keyword>
<keyword id="KW-0560">Oxidoreductase</keyword>
<keyword id="KW-0576">Peroxisome</keyword>
<keyword id="KW-1185">Reference proteome</keyword>
<comment type="function">
    <text>Oxidizes aliphatic acyl-CoA substrates of different chain lengths such as hexanoyl-CoA, decanoyl-CoA and myristoyl-CoA as well as aromatic/heterocyclic ring-substituted chromogenic substrates, such as furylpropionyl-CoA. Of the above substrates, the efficiency of the enzyme, exhibits the following order: decanoyl-CoA &gt; myristoyl-CoA &gt; hexanoyl-CoA &gt; furyl-propionyl-CoA.</text>
</comment>
<comment type="catalytic activity">
    <reaction>
        <text>a 2,3-saturated acyl-CoA + O2 = a (2E)-enoyl-CoA + H2O2</text>
        <dbReference type="Rhea" id="RHEA:38959"/>
        <dbReference type="ChEBI" id="CHEBI:15379"/>
        <dbReference type="ChEBI" id="CHEBI:16240"/>
        <dbReference type="ChEBI" id="CHEBI:58856"/>
        <dbReference type="ChEBI" id="CHEBI:65111"/>
        <dbReference type="EC" id="1.3.3.6"/>
    </reaction>
</comment>
<comment type="cofactor">
    <cofactor evidence="1">
        <name>FAD</name>
        <dbReference type="ChEBI" id="CHEBI:57692"/>
    </cofactor>
</comment>
<comment type="biophysicochemical properties">
    <phDependence>
        <text>Optimum pH is 7.4.</text>
    </phDependence>
    <temperatureDependence>
        <text>Optimum temperature is 23-38 degrees Celsius.</text>
    </temperatureDependence>
</comment>
<comment type="pathway">
    <text>Lipid metabolism; peroxisomal fatty acid beta-oxidation.</text>
</comment>
<comment type="subunit">
    <text evidence="2">Heteropentamer composed of five different subunits.</text>
</comment>
<comment type="subcellular location">
    <subcellularLocation>
        <location evidence="2">Peroxisome</location>
    </subcellularLocation>
</comment>
<comment type="similarity">
    <text evidence="3">Belongs to the acyl-CoA oxidase family.</text>
</comment>
<reference key="1">
    <citation type="journal article" date="1998" name="Yeast">
        <title>Cloning and characterization of the peroxisomal acyl CoA oxidase ACO3 gene from the alkane-utilizing yeast Yarrowia lipolytica.</title>
        <authorList>
            <person name="Wang H."/>
            <person name="Le Clainche A."/>
            <person name="le Dall M.-T."/>
            <person name="Wache Y."/>
            <person name="Pagot Y."/>
            <person name="Belin J.M."/>
            <person name="Gaillardin C."/>
            <person name="Nicaud J.-M."/>
        </authorList>
    </citation>
    <scope>NUCLEOTIDE SEQUENCE [GENOMIC DNA]</scope>
    <scope>CHARACTERIZATION</scope>
    <source>
        <strain>ATCC 20460 / W29 / CBS 7504 / IFP29</strain>
    </source>
</reference>
<reference key="2">
    <citation type="journal article" date="2004" name="Nature">
        <title>Genome evolution in yeasts.</title>
        <authorList>
            <person name="Dujon B."/>
            <person name="Sherman D."/>
            <person name="Fischer G."/>
            <person name="Durrens P."/>
            <person name="Casaregola S."/>
            <person name="Lafontaine I."/>
            <person name="de Montigny J."/>
            <person name="Marck C."/>
            <person name="Neuveglise C."/>
            <person name="Talla E."/>
            <person name="Goffard N."/>
            <person name="Frangeul L."/>
            <person name="Aigle M."/>
            <person name="Anthouard V."/>
            <person name="Babour A."/>
            <person name="Barbe V."/>
            <person name="Barnay S."/>
            <person name="Blanchin S."/>
            <person name="Beckerich J.-M."/>
            <person name="Beyne E."/>
            <person name="Bleykasten C."/>
            <person name="Boisrame A."/>
            <person name="Boyer J."/>
            <person name="Cattolico L."/>
            <person name="Confanioleri F."/>
            <person name="de Daruvar A."/>
            <person name="Despons L."/>
            <person name="Fabre E."/>
            <person name="Fairhead C."/>
            <person name="Ferry-Dumazet H."/>
            <person name="Groppi A."/>
            <person name="Hantraye F."/>
            <person name="Hennequin C."/>
            <person name="Jauniaux N."/>
            <person name="Joyet P."/>
            <person name="Kachouri R."/>
            <person name="Kerrest A."/>
            <person name="Koszul R."/>
            <person name="Lemaire M."/>
            <person name="Lesur I."/>
            <person name="Ma L."/>
            <person name="Muller H."/>
            <person name="Nicaud J.-M."/>
            <person name="Nikolski M."/>
            <person name="Oztas S."/>
            <person name="Ozier-Kalogeropoulos O."/>
            <person name="Pellenz S."/>
            <person name="Potier S."/>
            <person name="Richard G.-F."/>
            <person name="Straub M.-L."/>
            <person name="Suleau A."/>
            <person name="Swennen D."/>
            <person name="Tekaia F."/>
            <person name="Wesolowski-Louvel M."/>
            <person name="Westhof E."/>
            <person name="Wirth B."/>
            <person name="Zeniou-Meyer M."/>
            <person name="Zivanovic Y."/>
            <person name="Bolotin-Fukuhara M."/>
            <person name="Thierry A."/>
            <person name="Bouchier C."/>
            <person name="Caudron B."/>
            <person name="Scarpelli C."/>
            <person name="Gaillardin C."/>
            <person name="Weissenbach J."/>
            <person name="Wincker P."/>
            <person name="Souciet J.-L."/>
        </authorList>
    </citation>
    <scope>NUCLEOTIDE SEQUENCE [LARGE SCALE GENOMIC DNA]</scope>
    <source>
        <strain>CLIB 122 / E 150</strain>
    </source>
</reference>
<reference key="3">
    <citation type="journal article" date="2000" name="Arch. Biochem. Biophys.">
        <title>Purification and characterization of the recombinant form of Acyl CoA oxidase 3 from the yeast Yarrowia lipolytica.</title>
        <authorList>
            <person name="Luo Y.S."/>
            <person name="Wang H.J."/>
            <person name="Gopalan K.V."/>
            <person name="Srivastava D.K."/>
            <person name="Nicaud J.-M."/>
            <person name="Chardot T."/>
        </authorList>
    </citation>
    <scope>CHARACTERIZATION</scope>
</reference>
<reference key="4">
    <citation type="journal article" date="2002" name="J. Cell Biol.">
        <title>Acyl-CoA oxidase is imported as a heteropentameric, cofactor-containing complex into peroxisomes of Yarrowia lipolytica.</title>
        <authorList>
            <person name="Titorenko V.I."/>
            <person name="Nicaud J.-M."/>
            <person name="Wang H."/>
            <person name="Chan H."/>
            <person name="Rachubinski R.A."/>
        </authorList>
    </citation>
    <scope>SUBUNIT</scope>
    <scope>SUBCELLULAR LOCATION</scope>
</reference>
<feature type="chain" id="PRO_0000204703" description="Acyl-coenzyme A oxidase 3">
    <location>
        <begin position="1"/>
        <end position="700"/>
    </location>
</feature>
<feature type="strand" evidence="4">
    <location>
        <begin position="10"/>
        <end position="12"/>
    </location>
</feature>
<feature type="strand" evidence="4">
    <location>
        <begin position="15"/>
        <end position="17"/>
    </location>
</feature>
<feature type="turn" evidence="4">
    <location>
        <begin position="19"/>
        <end position="21"/>
    </location>
</feature>
<feature type="helix" evidence="4">
    <location>
        <begin position="23"/>
        <end position="31"/>
    </location>
</feature>
<feature type="helix" evidence="4">
    <location>
        <begin position="38"/>
        <end position="46"/>
    </location>
</feature>
<feature type="helix" evidence="4">
    <location>
        <begin position="49"/>
        <end position="63"/>
    </location>
</feature>
<feature type="turn" evidence="4">
    <location>
        <begin position="66"/>
        <end position="68"/>
    </location>
</feature>
<feature type="helix" evidence="4">
    <location>
        <begin position="73"/>
        <end position="75"/>
    </location>
</feature>
<feature type="helix" evidence="4">
    <location>
        <begin position="78"/>
        <end position="92"/>
    </location>
</feature>
<feature type="helix" evidence="4">
    <location>
        <begin position="93"/>
        <end position="95"/>
    </location>
</feature>
<feature type="turn" evidence="4">
    <location>
        <begin position="96"/>
        <end position="98"/>
    </location>
</feature>
<feature type="helix" evidence="4">
    <location>
        <begin position="101"/>
        <end position="111"/>
    </location>
</feature>
<feature type="turn" evidence="4">
    <location>
        <begin position="112"/>
        <end position="114"/>
    </location>
</feature>
<feature type="helix" evidence="4">
    <location>
        <begin position="116"/>
        <end position="126"/>
    </location>
</feature>
<feature type="helix" evidence="4">
    <location>
        <begin position="128"/>
        <end position="136"/>
    </location>
</feature>
<feature type="helix" evidence="4">
    <location>
        <begin position="139"/>
        <end position="147"/>
    </location>
</feature>
<feature type="turn" evidence="4">
    <location>
        <begin position="148"/>
        <end position="153"/>
    </location>
</feature>
<feature type="strand" evidence="4">
    <location>
        <begin position="158"/>
        <end position="161"/>
    </location>
</feature>
<feature type="strand" evidence="4">
    <location>
        <begin position="164"/>
        <end position="166"/>
    </location>
</feature>
<feature type="helix" evidence="4">
    <location>
        <begin position="171"/>
        <end position="173"/>
    </location>
</feature>
<feature type="strand" evidence="4">
    <location>
        <begin position="177"/>
        <end position="181"/>
    </location>
</feature>
<feature type="turn" evidence="4">
    <location>
        <begin position="182"/>
        <end position="185"/>
    </location>
</feature>
<feature type="strand" evidence="4">
    <location>
        <begin position="186"/>
        <end position="190"/>
    </location>
</feature>
<feature type="helix" evidence="4">
    <location>
        <begin position="194"/>
        <end position="196"/>
    </location>
</feature>
<feature type="strand" evidence="4">
    <location>
        <begin position="198"/>
        <end position="201"/>
    </location>
</feature>
<feature type="turn" evidence="4">
    <location>
        <begin position="202"/>
        <end position="207"/>
    </location>
</feature>
<feature type="strand" evidence="4">
    <location>
        <begin position="209"/>
        <end position="219"/>
    </location>
</feature>
<feature type="strand" evidence="4">
    <location>
        <begin position="222"/>
        <end position="232"/>
    </location>
</feature>
<feature type="turn" evidence="4">
    <location>
        <begin position="236"/>
        <end position="238"/>
    </location>
</feature>
<feature type="strand" evidence="4">
    <location>
        <begin position="245"/>
        <end position="249"/>
    </location>
</feature>
<feature type="strand" evidence="4">
    <location>
        <begin position="253"/>
        <end position="255"/>
    </location>
</feature>
<feature type="strand" evidence="4">
    <location>
        <begin position="262"/>
        <end position="272"/>
    </location>
</feature>
<feature type="helix" evidence="4">
    <location>
        <begin position="273"/>
        <end position="275"/>
    </location>
</feature>
<feature type="strand" evidence="4">
    <location>
        <begin position="279"/>
        <end position="283"/>
    </location>
</feature>
<feature type="helix" evidence="4">
    <location>
        <begin position="300"/>
        <end position="330"/>
    </location>
</feature>
<feature type="helix" evidence="4">
    <location>
        <begin position="345"/>
        <end position="347"/>
    </location>
</feature>
<feature type="helix" evidence="4">
    <location>
        <begin position="349"/>
        <end position="385"/>
    </location>
</feature>
<feature type="helix" evidence="4">
    <location>
        <begin position="391"/>
        <end position="428"/>
    </location>
</feature>
<feature type="helix" evidence="4">
    <location>
        <begin position="429"/>
        <end position="435"/>
    </location>
</feature>
<feature type="helix" evidence="4">
    <location>
        <begin position="437"/>
        <end position="439"/>
    </location>
</feature>
<feature type="helix" evidence="4">
    <location>
        <begin position="441"/>
        <end position="448"/>
    </location>
</feature>
<feature type="helix" evidence="4">
    <location>
        <begin position="449"/>
        <end position="452"/>
    </location>
</feature>
<feature type="strand" evidence="4">
    <location>
        <begin position="454"/>
        <end position="456"/>
    </location>
</feature>
<feature type="helix" evidence="4">
    <location>
        <begin position="458"/>
        <end position="477"/>
    </location>
</feature>
<feature type="helix" evidence="4">
    <location>
        <begin position="484"/>
        <end position="490"/>
    </location>
</feature>
<feature type="helix" evidence="4">
    <location>
        <begin position="492"/>
        <end position="494"/>
    </location>
</feature>
<feature type="helix" evidence="4">
    <location>
        <begin position="507"/>
        <end position="534"/>
    </location>
</feature>
<feature type="helix" evidence="4">
    <location>
        <begin position="539"/>
        <end position="545"/>
    </location>
</feature>
<feature type="helix" evidence="4">
    <location>
        <begin position="547"/>
        <end position="573"/>
    </location>
</feature>
<feature type="turn" evidence="4">
    <location>
        <begin position="576"/>
        <end position="578"/>
    </location>
</feature>
<feature type="helix" evidence="4">
    <location>
        <begin position="579"/>
        <end position="596"/>
    </location>
</feature>
<feature type="helix" evidence="4">
    <location>
        <begin position="598"/>
        <end position="603"/>
    </location>
</feature>
<feature type="helix" evidence="4">
    <location>
        <begin position="609"/>
        <end position="628"/>
    </location>
</feature>
<feature type="helix" evidence="4">
    <location>
        <begin position="630"/>
        <end position="635"/>
    </location>
</feature>
<feature type="helix" evidence="4">
    <location>
        <begin position="641"/>
        <end position="644"/>
    </location>
</feature>
<feature type="helix" evidence="4">
    <location>
        <begin position="647"/>
        <end position="649"/>
    </location>
</feature>
<feature type="helix" evidence="4">
    <location>
        <begin position="655"/>
        <end position="666"/>
    </location>
</feature>
<feature type="turn" evidence="4">
    <location>
        <begin position="675"/>
        <end position="680"/>
    </location>
</feature>
<feature type="helix" evidence="4">
    <location>
        <begin position="681"/>
        <end position="685"/>
    </location>
</feature>
<proteinExistence type="evidence at protein level"/>
<gene>
    <name type="primary">POX3</name>
    <name type="synonym">ACO3</name>
    <name type="ordered locus">YALI0D24750g</name>
</gene>
<protein>
    <recommendedName>
        <fullName>Acyl-coenzyme A oxidase 3</fullName>
        <shortName>Acyl-CoA oxidase 3</shortName>
        <ecNumber>1.3.3.6</ecNumber>
    </recommendedName>
</protein>
<accession>O74936</accession>
<accession>Q6C7W8</accession>
<dbReference type="EC" id="1.3.3.6"/>
<dbReference type="EMBL" id="AJ001301">
    <property type="protein sequence ID" value="CAA04661.1"/>
    <property type="molecule type" value="Genomic_DNA"/>
</dbReference>
<dbReference type="EMBL" id="CR382130">
    <property type="protein sequence ID" value="CAG81448.1"/>
    <property type="molecule type" value="Genomic_DNA"/>
</dbReference>
<dbReference type="RefSeq" id="XP_503244.1">
    <property type="nucleotide sequence ID" value="XM_503244.1"/>
</dbReference>
<dbReference type="PDB" id="5YS9">
    <property type="method" value="X-ray"/>
    <property type="resolution" value="2.50 A"/>
    <property type="chains" value="A/B=1-700"/>
</dbReference>
<dbReference type="PDBsum" id="5YS9"/>
<dbReference type="SMR" id="O74936"/>
<dbReference type="FunCoup" id="O74936">
    <property type="interactions" value="432"/>
</dbReference>
<dbReference type="STRING" id="284591.O74936"/>
<dbReference type="EnsemblFungi" id="CAG81448">
    <property type="protein sequence ID" value="CAG81448"/>
    <property type="gene ID" value="YALI0_D24750g"/>
</dbReference>
<dbReference type="KEGG" id="yli:2910308"/>
<dbReference type="VEuPathDB" id="FungiDB:YALI0_D24750g"/>
<dbReference type="HOGENOM" id="CLU_014629_3_1_1"/>
<dbReference type="InParanoid" id="O74936"/>
<dbReference type="OrthoDB" id="60257at4891"/>
<dbReference type="UniPathway" id="UPA00661"/>
<dbReference type="Proteomes" id="UP000001300">
    <property type="component" value="Chromosome D"/>
</dbReference>
<dbReference type="GO" id="GO:0005777">
    <property type="term" value="C:peroxisome"/>
    <property type="evidence" value="ECO:0000318"/>
    <property type="project" value="GO_Central"/>
</dbReference>
<dbReference type="GO" id="GO:0003997">
    <property type="term" value="F:acyl-CoA oxidase activity"/>
    <property type="evidence" value="ECO:0000318"/>
    <property type="project" value="GO_Central"/>
</dbReference>
<dbReference type="GO" id="GO:0071949">
    <property type="term" value="F:FAD binding"/>
    <property type="evidence" value="ECO:0007669"/>
    <property type="project" value="InterPro"/>
</dbReference>
<dbReference type="GO" id="GO:0005504">
    <property type="term" value="F:fatty acid binding"/>
    <property type="evidence" value="ECO:0000318"/>
    <property type="project" value="GO_Central"/>
</dbReference>
<dbReference type="GO" id="GO:0050660">
    <property type="term" value="F:flavin adenine dinucleotide binding"/>
    <property type="evidence" value="ECO:0000318"/>
    <property type="project" value="GO_Central"/>
</dbReference>
<dbReference type="GO" id="GO:0033540">
    <property type="term" value="P:fatty acid beta-oxidation using acyl-CoA oxidase"/>
    <property type="evidence" value="ECO:0000318"/>
    <property type="project" value="GO_Central"/>
</dbReference>
<dbReference type="FunFam" id="1.10.540.10:FF:000018">
    <property type="entry name" value="Acyl-coenzyme A oxidase"/>
    <property type="match status" value="1"/>
</dbReference>
<dbReference type="FunFam" id="1.20.140.10:FF:000013">
    <property type="entry name" value="Acyl-coenzyme A oxidase"/>
    <property type="match status" value="1"/>
</dbReference>
<dbReference type="FunFam" id="1.20.140.10:FF:000015">
    <property type="entry name" value="Acyl-coenzyme A oxidase"/>
    <property type="match status" value="1"/>
</dbReference>
<dbReference type="FunFam" id="2.40.110.10:FF:000003">
    <property type="entry name" value="Acyl-coenzyme A oxidase"/>
    <property type="match status" value="1"/>
</dbReference>
<dbReference type="Gene3D" id="1.10.540.10">
    <property type="entry name" value="Acyl-CoA dehydrogenase/oxidase, N-terminal domain"/>
    <property type="match status" value="1"/>
</dbReference>
<dbReference type="Gene3D" id="2.40.110.10">
    <property type="entry name" value="Butyryl-CoA Dehydrogenase, subunit A, domain 2"/>
    <property type="match status" value="1"/>
</dbReference>
<dbReference type="Gene3D" id="1.20.140.10">
    <property type="entry name" value="Butyryl-CoA Dehydrogenase, subunit A, domain 3"/>
    <property type="match status" value="2"/>
</dbReference>
<dbReference type="InterPro" id="IPR055060">
    <property type="entry name" value="ACOX_C_alpha1"/>
</dbReference>
<dbReference type="InterPro" id="IPR029320">
    <property type="entry name" value="Acyl-CoA_ox_N"/>
</dbReference>
<dbReference type="InterPro" id="IPR006091">
    <property type="entry name" value="Acyl-CoA_Oxase/DH_mid-dom"/>
</dbReference>
<dbReference type="InterPro" id="IPR046373">
    <property type="entry name" value="Acyl-CoA_Oxase/DH_mid-dom_sf"/>
</dbReference>
<dbReference type="InterPro" id="IPR012258">
    <property type="entry name" value="Acyl-CoA_oxidase"/>
</dbReference>
<dbReference type="InterPro" id="IPR002655">
    <property type="entry name" value="Acyl-CoA_oxidase_C"/>
</dbReference>
<dbReference type="InterPro" id="IPR036250">
    <property type="entry name" value="AcylCo_DH-like_C"/>
</dbReference>
<dbReference type="InterPro" id="IPR037069">
    <property type="entry name" value="AcylCoA_DH/ox_N_sf"/>
</dbReference>
<dbReference type="InterPro" id="IPR009100">
    <property type="entry name" value="AcylCoA_DH/oxidase_NM_dom_sf"/>
</dbReference>
<dbReference type="PANTHER" id="PTHR10909:SF352">
    <property type="entry name" value="ACYL-COENZYME A OXIDASE-LIKE PROTEIN"/>
    <property type="match status" value="1"/>
</dbReference>
<dbReference type="PANTHER" id="PTHR10909">
    <property type="entry name" value="ELECTRON TRANSPORT OXIDOREDUCTASE"/>
    <property type="match status" value="1"/>
</dbReference>
<dbReference type="Pfam" id="PF01756">
    <property type="entry name" value="ACOX"/>
    <property type="match status" value="1"/>
</dbReference>
<dbReference type="Pfam" id="PF22924">
    <property type="entry name" value="ACOX_C_alpha1"/>
    <property type="match status" value="1"/>
</dbReference>
<dbReference type="Pfam" id="PF02770">
    <property type="entry name" value="Acyl-CoA_dh_M"/>
    <property type="match status" value="1"/>
</dbReference>
<dbReference type="Pfam" id="PF14749">
    <property type="entry name" value="Acyl-CoA_ox_N"/>
    <property type="match status" value="1"/>
</dbReference>
<dbReference type="PIRSF" id="PIRSF000168">
    <property type="entry name" value="Acyl-CoA_oxidase"/>
    <property type="match status" value="1"/>
</dbReference>
<dbReference type="SUPFAM" id="SSF47203">
    <property type="entry name" value="Acyl-CoA dehydrogenase C-terminal domain-like"/>
    <property type="match status" value="2"/>
</dbReference>
<dbReference type="SUPFAM" id="SSF56645">
    <property type="entry name" value="Acyl-CoA dehydrogenase NM domain-like"/>
    <property type="match status" value="1"/>
</dbReference>
<sequence length="700" mass="78010">MISPNLTANVEIDGKQYNTFTEPPKALAGERAKVKFPIKDMTEFLHGGEENVTMIERLMTELERDPVLNVSGDYDMPKEQLRETAVARIAALSGHWKKDTEKEALLRSQLHGIVDMGTRIRLGVHTGLFMGAIRGSGTKEQYDYWVRKGAADVKGFYGCFAMTELGHGSNVAGLETTATYIQDTDEFIINTPNTGATKWWIGGAAHSATHTACFARLLVDGKDYGVKIFVVQLRDVSSHSLMPGIALGDIGKKMGRDAIDNGWIQFTNVRIPRQNMLMKYAKVSSTGKVSQPPLAQLTYGALIGGRVTMIADSFFVSQRFITIALRYACVRRQFGTTPGQPETKIIDYPYHQRRLLPLLAFTYAMKMAADQSQIQYDQTTDLLQTIDPKDKGALGKAIVDLKELFASSAGLKAFTTWTCANIIDQCRQACGGHGYSGYNGFGQAYADWVVQCTWEGDNNVLCLSMGRGLIQSCLGHRKGKPLGSSVGYLANKGLEQATLSGRDLKDPKVLIEAWEKVANGAIQRATDKFVELTKGGLSPDQAFEELSQQRFQCAKIHTRKHLVTAFYERINASAKADVKPYLINLANLFTLWSIEEDSGLFLREGFLQPKDIDQVTELVNHYCKEVRDQVAGYTDAFGLSDWFINAPIGNYDGDVYKHYFAKVNQQNPAQNPRPPYYESTLRPFLFREDEDDDICELDEE</sequence>